<feature type="chain" id="PRO_1000008489" description="Holo-[acyl-carrier-protein] synthase">
    <location>
        <begin position="1"/>
        <end position="125"/>
    </location>
</feature>
<feature type="binding site" evidence="1">
    <location>
        <position position="9"/>
    </location>
    <ligand>
        <name>Mg(2+)</name>
        <dbReference type="ChEBI" id="CHEBI:18420"/>
    </ligand>
</feature>
<feature type="binding site" evidence="1">
    <location>
        <position position="58"/>
    </location>
    <ligand>
        <name>Mg(2+)</name>
        <dbReference type="ChEBI" id="CHEBI:18420"/>
    </ligand>
</feature>
<evidence type="ECO:0000255" key="1">
    <source>
        <dbReference type="HAMAP-Rule" id="MF_00101"/>
    </source>
</evidence>
<reference key="1">
    <citation type="submission" date="2006-12" db="EMBL/GenBank/DDBJ databases">
        <title>Complete sequence of Shewanella amazonensis SB2B.</title>
        <authorList>
            <consortium name="US DOE Joint Genome Institute"/>
            <person name="Copeland A."/>
            <person name="Lucas S."/>
            <person name="Lapidus A."/>
            <person name="Barry K."/>
            <person name="Detter J.C."/>
            <person name="Glavina del Rio T."/>
            <person name="Hammon N."/>
            <person name="Israni S."/>
            <person name="Dalin E."/>
            <person name="Tice H."/>
            <person name="Pitluck S."/>
            <person name="Munk A.C."/>
            <person name="Brettin T."/>
            <person name="Bruce D."/>
            <person name="Han C."/>
            <person name="Tapia R."/>
            <person name="Gilna P."/>
            <person name="Schmutz J."/>
            <person name="Larimer F."/>
            <person name="Land M."/>
            <person name="Hauser L."/>
            <person name="Kyrpides N."/>
            <person name="Mikhailova N."/>
            <person name="Fredrickson J."/>
            <person name="Richardson P."/>
        </authorList>
    </citation>
    <scope>NUCLEOTIDE SEQUENCE [LARGE SCALE GENOMIC DNA]</scope>
    <source>
        <strain>ATCC BAA-1098 / SB2B</strain>
    </source>
</reference>
<protein>
    <recommendedName>
        <fullName evidence="1">Holo-[acyl-carrier-protein] synthase</fullName>
        <shortName evidence="1">Holo-ACP synthase</shortName>
        <ecNumber evidence="1">2.7.8.7</ecNumber>
    </recommendedName>
    <alternativeName>
        <fullName evidence="1">4'-phosphopantetheinyl transferase AcpS</fullName>
    </alternativeName>
</protein>
<name>ACPS_SHEAM</name>
<dbReference type="EC" id="2.7.8.7" evidence="1"/>
<dbReference type="EMBL" id="CP000507">
    <property type="protein sequence ID" value="ABL99091.1"/>
    <property type="molecule type" value="Genomic_DNA"/>
</dbReference>
<dbReference type="RefSeq" id="WP_011759001.1">
    <property type="nucleotide sequence ID" value="NC_008700.1"/>
</dbReference>
<dbReference type="SMR" id="A1S3Y5"/>
<dbReference type="STRING" id="326297.Sama_0884"/>
<dbReference type="KEGG" id="saz:Sama_0884"/>
<dbReference type="eggNOG" id="COG0736">
    <property type="taxonomic scope" value="Bacteria"/>
</dbReference>
<dbReference type="HOGENOM" id="CLU_089696_3_1_6"/>
<dbReference type="OrthoDB" id="517356at2"/>
<dbReference type="Proteomes" id="UP000009175">
    <property type="component" value="Chromosome"/>
</dbReference>
<dbReference type="GO" id="GO:0005737">
    <property type="term" value="C:cytoplasm"/>
    <property type="evidence" value="ECO:0007669"/>
    <property type="project" value="UniProtKB-SubCell"/>
</dbReference>
<dbReference type="GO" id="GO:0008897">
    <property type="term" value="F:holo-[acyl-carrier-protein] synthase activity"/>
    <property type="evidence" value="ECO:0007669"/>
    <property type="project" value="UniProtKB-UniRule"/>
</dbReference>
<dbReference type="GO" id="GO:0000287">
    <property type="term" value="F:magnesium ion binding"/>
    <property type="evidence" value="ECO:0007669"/>
    <property type="project" value="UniProtKB-UniRule"/>
</dbReference>
<dbReference type="GO" id="GO:0006633">
    <property type="term" value="P:fatty acid biosynthetic process"/>
    <property type="evidence" value="ECO:0007669"/>
    <property type="project" value="UniProtKB-UniRule"/>
</dbReference>
<dbReference type="FunFam" id="3.90.470.20:FF:000001">
    <property type="entry name" value="Holo-[acyl-carrier-protein] synthase"/>
    <property type="match status" value="1"/>
</dbReference>
<dbReference type="Gene3D" id="3.90.470.20">
    <property type="entry name" value="4'-phosphopantetheinyl transferase domain"/>
    <property type="match status" value="1"/>
</dbReference>
<dbReference type="HAMAP" id="MF_00101">
    <property type="entry name" value="AcpS"/>
    <property type="match status" value="1"/>
</dbReference>
<dbReference type="InterPro" id="IPR008278">
    <property type="entry name" value="4-PPantetheinyl_Trfase_dom"/>
</dbReference>
<dbReference type="InterPro" id="IPR037143">
    <property type="entry name" value="4-PPantetheinyl_Trfase_dom_sf"/>
</dbReference>
<dbReference type="InterPro" id="IPR002582">
    <property type="entry name" value="ACPS"/>
</dbReference>
<dbReference type="InterPro" id="IPR004568">
    <property type="entry name" value="Ppantetheine-prot_Trfase_dom"/>
</dbReference>
<dbReference type="NCBIfam" id="TIGR00516">
    <property type="entry name" value="acpS"/>
    <property type="match status" value="1"/>
</dbReference>
<dbReference type="NCBIfam" id="TIGR00556">
    <property type="entry name" value="pantethn_trn"/>
    <property type="match status" value="1"/>
</dbReference>
<dbReference type="Pfam" id="PF01648">
    <property type="entry name" value="ACPS"/>
    <property type="match status" value="1"/>
</dbReference>
<dbReference type="SUPFAM" id="SSF56214">
    <property type="entry name" value="4'-phosphopantetheinyl transferase"/>
    <property type="match status" value="1"/>
</dbReference>
<proteinExistence type="inferred from homology"/>
<comment type="function">
    <text evidence="1">Transfers the 4'-phosphopantetheine moiety from coenzyme A to a Ser of acyl-carrier-protein.</text>
</comment>
<comment type="catalytic activity">
    <reaction evidence="1">
        <text>apo-[ACP] + CoA = holo-[ACP] + adenosine 3',5'-bisphosphate + H(+)</text>
        <dbReference type="Rhea" id="RHEA:12068"/>
        <dbReference type="Rhea" id="RHEA-COMP:9685"/>
        <dbReference type="Rhea" id="RHEA-COMP:9690"/>
        <dbReference type="ChEBI" id="CHEBI:15378"/>
        <dbReference type="ChEBI" id="CHEBI:29999"/>
        <dbReference type="ChEBI" id="CHEBI:57287"/>
        <dbReference type="ChEBI" id="CHEBI:58343"/>
        <dbReference type="ChEBI" id="CHEBI:64479"/>
        <dbReference type="EC" id="2.7.8.7"/>
    </reaction>
</comment>
<comment type="cofactor">
    <cofactor evidence="1">
        <name>Mg(2+)</name>
        <dbReference type="ChEBI" id="CHEBI:18420"/>
    </cofactor>
</comment>
<comment type="subcellular location">
    <subcellularLocation>
        <location evidence="1">Cytoplasm</location>
    </subcellularLocation>
</comment>
<comment type="similarity">
    <text evidence="1">Belongs to the P-Pant transferase superfamily. AcpS family.</text>
</comment>
<gene>
    <name evidence="1" type="primary">acpS</name>
    <name type="ordered locus">Sama_0884</name>
</gene>
<accession>A1S3Y5</accession>
<keyword id="KW-0963">Cytoplasm</keyword>
<keyword id="KW-0275">Fatty acid biosynthesis</keyword>
<keyword id="KW-0276">Fatty acid metabolism</keyword>
<keyword id="KW-0444">Lipid biosynthesis</keyword>
<keyword id="KW-0443">Lipid metabolism</keyword>
<keyword id="KW-0460">Magnesium</keyword>
<keyword id="KW-0479">Metal-binding</keyword>
<keyword id="KW-1185">Reference proteome</keyword>
<keyword id="KW-0808">Transferase</keyword>
<organism>
    <name type="scientific">Shewanella amazonensis (strain ATCC BAA-1098 / SB2B)</name>
    <dbReference type="NCBI Taxonomy" id="326297"/>
    <lineage>
        <taxon>Bacteria</taxon>
        <taxon>Pseudomonadati</taxon>
        <taxon>Pseudomonadota</taxon>
        <taxon>Gammaproteobacteria</taxon>
        <taxon>Alteromonadales</taxon>
        <taxon>Shewanellaceae</taxon>
        <taxon>Shewanella</taxon>
    </lineage>
</organism>
<sequence>MSVLGLGTDIVEIERIRSQLERGGDRLAKRILTESELAIFVGSGQRELYLAKRFAAKEAVAKALGTGIGRGVSFQHIETYSDEFGAPCVRLSDGALERMQQLGGSQIRLSIADERHYAVATAILC</sequence>